<sequence length="161" mass="17671">MAAKAFFDIKAGDERLGRIIFELFNDVPDTTRNFRELCTHKNNFGYKGSVFHRIIPGFMCQGGDFTNGDGTGGKSIYGNKFKDENFNHKHEAFSLSMANAGPNTNGSQFFITTVPCSWLDGKHVVFGKVVSGIDVVKKMESLGSTSGKPSKKIIIEDCGEC</sequence>
<keyword id="KW-0413">Isomerase</keyword>
<keyword id="KW-1185">Reference proteome</keyword>
<keyword id="KW-0697">Rotamase</keyword>
<accession>Q26565</accession>
<dbReference type="EC" id="5.2.1.8"/>
<dbReference type="EMBL" id="L46884">
    <property type="protein sequence ID" value="AAB41257.1"/>
    <property type="molecule type" value="mRNA"/>
</dbReference>
<dbReference type="RefSeq" id="XP_018652799.1">
    <property type="nucleotide sequence ID" value="XM_018797792.1"/>
</dbReference>
<dbReference type="SMR" id="Q26565"/>
<dbReference type="STRING" id="6183.Q26565"/>
<dbReference type="EnsemblMetazoa" id="Smp_040130.1">
    <property type="protein sequence ID" value="Smp_040130.1"/>
    <property type="gene ID" value="Smp_040130"/>
</dbReference>
<dbReference type="GeneID" id="8347523"/>
<dbReference type="KEGG" id="smm:Smp_040130"/>
<dbReference type="WBParaSite" id="Smp_040130.1">
    <property type="protein sequence ID" value="Smp_040130.1"/>
    <property type="gene ID" value="Smp_040130"/>
</dbReference>
<dbReference type="CTD" id="8347523"/>
<dbReference type="eggNOG" id="KOG0865">
    <property type="taxonomic scope" value="Eukaryota"/>
</dbReference>
<dbReference type="HOGENOM" id="CLU_012062_4_3_1"/>
<dbReference type="InParanoid" id="Q26565"/>
<dbReference type="OMA" id="TWLTGKH"/>
<dbReference type="OrthoDB" id="193499at2759"/>
<dbReference type="PhylomeDB" id="Q26565"/>
<dbReference type="Proteomes" id="UP000008854">
    <property type="component" value="Unassembled WGS sequence"/>
</dbReference>
<dbReference type="ExpressionAtlas" id="Q26565">
    <property type="expression patterns" value="baseline"/>
</dbReference>
<dbReference type="GO" id="GO:0005737">
    <property type="term" value="C:cytoplasm"/>
    <property type="evidence" value="ECO:0007669"/>
    <property type="project" value="TreeGrafter"/>
</dbReference>
<dbReference type="GO" id="GO:0043231">
    <property type="term" value="C:intracellular membrane-bounded organelle"/>
    <property type="evidence" value="ECO:0007669"/>
    <property type="project" value="TreeGrafter"/>
</dbReference>
<dbReference type="GO" id="GO:0016018">
    <property type="term" value="F:cyclosporin A binding"/>
    <property type="evidence" value="ECO:0007669"/>
    <property type="project" value="TreeGrafter"/>
</dbReference>
<dbReference type="GO" id="GO:0003755">
    <property type="term" value="F:peptidyl-prolyl cis-trans isomerase activity"/>
    <property type="evidence" value="ECO:0007669"/>
    <property type="project" value="UniProtKB-KW"/>
</dbReference>
<dbReference type="GO" id="GO:0006457">
    <property type="term" value="P:protein folding"/>
    <property type="evidence" value="ECO:0007669"/>
    <property type="project" value="InterPro"/>
</dbReference>
<dbReference type="FunFam" id="2.40.100.10:FF:000013">
    <property type="entry name" value="Peptidyl-prolyl cis-trans isomerase"/>
    <property type="match status" value="1"/>
</dbReference>
<dbReference type="Gene3D" id="2.40.100.10">
    <property type="entry name" value="Cyclophilin-like"/>
    <property type="match status" value="1"/>
</dbReference>
<dbReference type="InterPro" id="IPR029000">
    <property type="entry name" value="Cyclophilin-like_dom_sf"/>
</dbReference>
<dbReference type="InterPro" id="IPR024936">
    <property type="entry name" value="Cyclophilin-type_PPIase"/>
</dbReference>
<dbReference type="InterPro" id="IPR020892">
    <property type="entry name" value="Cyclophilin-type_PPIase_CS"/>
</dbReference>
<dbReference type="InterPro" id="IPR002130">
    <property type="entry name" value="Cyclophilin-type_PPIase_dom"/>
</dbReference>
<dbReference type="PANTHER" id="PTHR11071">
    <property type="entry name" value="PEPTIDYL-PROLYL CIS-TRANS ISOMERASE"/>
    <property type="match status" value="1"/>
</dbReference>
<dbReference type="PANTHER" id="PTHR11071:SF569">
    <property type="entry name" value="PEPTIDYL-PROLYL CIS-TRANS ISOMERASE"/>
    <property type="match status" value="1"/>
</dbReference>
<dbReference type="Pfam" id="PF00160">
    <property type="entry name" value="Pro_isomerase"/>
    <property type="match status" value="1"/>
</dbReference>
<dbReference type="PIRSF" id="PIRSF001467">
    <property type="entry name" value="Peptidylpro_ismrse"/>
    <property type="match status" value="1"/>
</dbReference>
<dbReference type="PRINTS" id="PR00153">
    <property type="entry name" value="CSAPPISMRASE"/>
</dbReference>
<dbReference type="SUPFAM" id="SSF50891">
    <property type="entry name" value="Cyclophilin-like"/>
    <property type="match status" value="1"/>
</dbReference>
<dbReference type="PROSITE" id="PS00170">
    <property type="entry name" value="CSA_PPIASE_1"/>
    <property type="match status" value="1"/>
</dbReference>
<dbReference type="PROSITE" id="PS50072">
    <property type="entry name" value="CSA_PPIASE_2"/>
    <property type="match status" value="1"/>
</dbReference>
<organism>
    <name type="scientific">Schistosoma mansoni</name>
    <name type="common">Blood fluke</name>
    <dbReference type="NCBI Taxonomy" id="6183"/>
    <lineage>
        <taxon>Eukaryota</taxon>
        <taxon>Metazoa</taxon>
        <taxon>Spiralia</taxon>
        <taxon>Lophotrochozoa</taxon>
        <taxon>Platyhelminthes</taxon>
        <taxon>Trematoda</taxon>
        <taxon>Digenea</taxon>
        <taxon>Strigeidida</taxon>
        <taxon>Schistosomatoidea</taxon>
        <taxon>Schistosomatidae</taxon>
        <taxon>Schistosoma</taxon>
    </lineage>
</organism>
<evidence type="ECO:0000255" key="1">
    <source>
        <dbReference type="PROSITE-ProRule" id="PRU00156"/>
    </source>
</evidence>
<evidence type="ECO:0000305" key="2"/>
<reference key="1">
    <citation type="journal article" date="1996" name="Mol. Biochem. Parasitol.">
        <title>Identification and characterization of Schistosoma mansoni p17.7, a cyclophilin.</title>
        <authorList>
            <person name="Kiang D."/>
            <person name="El Ghazalie N.E."/>
            <person name="Medhat A.M."/>
            <person name="Abdel-Fattah M."/>
            <person name="Karim A.M."/>
            <person name="Loverde P.T."/>
        </authorList>
    </citation>
    <scope>NUCLEOTIDE SEQUENCE [MRNA]</scope>
    <scope>CHARACTERIZATION</scope>
    <source>
        <strain>NMRI</strain>
    </source>
</reference>
<protein>
    <recommendedName>
        <fullName>Peptidyl-prolyl cis-trans isomerase</fullName>
        <shortName>PPIase</shortName>
        <ecNumber>5.2.1.8</ecNumber>
    </recommendedName>
    <alternativeName>
        <fullName>Cyclophilin</fullName>
    </alternativeName>
    <alternativeName>
        <fullName>Cyclosporin A-binding protein</fullName>
    </alternativeName>
    <alternativeName>
        <fullName>Rotamase</fullName>
    </alternativeName>
    <alternativeName>
        <fullName>Smp17.7</fullName>
    </alternativeName>
    <alternativeName>
        <fullName>p17.7</fullName>
    </alternativeName>
</protein>
<name>PPIA_SCHMA</name>
<comment type="function">
    <text>PPIases accelerate the folding of proteins. It catalyzes the cis-trans isomerization of proline imidic peptide bonds in oligopeptides.</text>
</comment>
<comment type="catalytic activity">
    <reaction>
        <text>[protein]-peptidylproline (omega=180) = [protein]-peptidylproline (omega=0)</text>
        <dbReference type="Rhea" id="RHEA:16237"/>
        <dbReference type="Rhea" id="RHEA-COMP:10747"/>
        <dbReference type="Rhea" id="RHEA-COMP:10748"/>
        <dbReference type="ChEBI" id="CHEBI:83833"/>
        <dbReference type="ChEBI" id="CHEBI:83834"/>
        <dbReference type="EC" id="5.2.1.8"/>
    </reaction>
</comment>
<comment type="activity regulation">
    <text>Binds cyclosporin A (CsA). CsA mediates some of its effects via an inhibitory action on PPIase.</text>
</comment>
<comment type="tissue specificity">
    <text>Found mainly in the tegument, gut epithelium, and muscle layers. Also found in the interior of the parasite.</text>
</comment>
<comment type="similarity">
    <text evidence="2">Belongs to the cyclophilin-type PPIase family. PPIase A subfamily.</text>
</comment>
<proteinExistence type="evidence at protein level"/>
<feature type="chain" id="PRO_0000064127" description="Peptidyl-prolyl cis-trans isomerase">
    <location>
        <begin position="1"/>
        <end position="161"/>
    </location>
</feature>
<feature type="domain" description="PPIase cyclophilin-type" evidence="1">
    <location>
        <begin position="6"/>
        <end position="160"/>
    </location>
</feature>